<proteinExistence type="inferred from homology"/>
<name>MSRQ_XANOR</name>
<sequence>MAKTSTSVIVAKTLVHAAALAPIALLGWQFWQVWQSGSDALGADPVAEIEHRTGLWALRFLLITLAITPLRQLTGQAVLIRFRRMLGLYAFFYATVHLAAYLTLDLRGFWTQIFEEILKRPYITVGFAAWLLLMPLAITSTQGWMRRLKRNWGRVHMLIYPIGLLAVLHFWWLVKSDIREPALYAGILAVLLGWRAWKKLSARRTKARRSAPPQATPR</sequence>
<accession>Q5H077</accession>
<gene>
    <name evidence="1" type="primary">msrQ</name>
    <name type="ordered locus">XOO2390</name>
</gene>
<organism>
    <name type="scientific">Xanthomonas oryzae pv. oryzae (strain KACC10331 / KXO85)</name>
    <dbReference type="NCBI Taxonomy" id="291331"/>
    <lineage>
        <taxon>Bacteria</taxon>
        <taxon>Pseudomonadati</taxon>
        <taxon>Pseudomonadota</taxon>
        <taxon>Gammaproteobacteria</taxon>
        <taxon>Lysobacterales</taxon>
        <taxon>Lysobacteraceae</taxon>
        <taxon>Xanthomonas</taxon>
    </lineage>
</organism>
<feature type="chain" id="PRO_1000066192" description="Protein-methionine-sulfoxide reductase heme-binding subunit MsrQ">
    <location>
        <begin position="1"/>
        <end position="218"/>
    </location>
</feature>
<feature type="transmembrane region" description="Helical" evidence="1">
    <location>
        <begin position="8"/>
        <end position="28"/>
    </location>
</feature>
<feature type="transmembrane region" description="Helical" evidence="1">
    <location>
        <begin position="60"/>
        <end position="80"/>
    </location>
</feature>
<feature type="transmembrane region" description="Helical" evidence="1">
    <location>
        <begin position="86"/>
        <end position="106"/>
    </location>
</feature>
<feature type="transmembrane region" description="Helical" evidence="1">
    <location>
        <begin position="121"/>
        <end position="141"/>
    </location>
</feature>
<feature type="transmembrane region" description="Helical" evidence="1">
    <location>
        <begin position="155"/>
        <end position="175"/>
    </location>
</feature>
<comment type="function">
    <text evidence="1">Part of the MsrPQ system that repairs oxidized periplasmic proteins containing methionine sulfoxide residues (Met-O), using respiratory chain electrons. Thus protects these proteins from oxidative-stress damage caused by reactive species of oxygen and chlorine generated by the host defense mechanisms. MsrPQ is essential for the maintenance of envelope integrity under bleach stress, rescuing a wide series of structurally unrelated periplasmic proteins from methionine oxidation. MsrQ provides electrons for reduction to the reductase catalytic subunit MsrP, using the quinone pool of the respiratory chain.</text>
</comment>
<comment type="cofactor">
    <cofactor evidence="1">
        <name>FMN</name>
        <dbReference type="ChEBI" id="CHEBI:58210"/>
    </cofactor>
    <text evidence="1">Binds 1 FMN per subunit.</text>
</comment>
<comment type="cofactor">
    <cofactor evidence="1">
        <name>heme b</name>
        <dbReference type="ChEBI" id="CHEBI:60344"/>
    </cofactor>
    <text evidence="1">Binds 1 heme b (iron(II)-protoporphyrin IX) group per subunit.</text>
</comment>
<comment type="subunit">
    <text evidence="1">Heterodimer of a catalytic subunit (MsrP) and a heme-binding subunit (MsrQ).</text>
</comment>
<comment type="subcellular location">
    <subcellularLocation>
        <location evidence="1">Cell inner membrane</location>
        <topology evidence="1">Multi-pass membrane protein</topology>
    </subcellularLocation>
</comment>
<comment type="similarity">
    <text evidence="1">Belongs to the MsrQ family.</text>
</comment>
<keyword id="KW-0997">Cell inner membrane</keyword>
<keyword id="KW-1003">Cell membrane</keyword>
<keyword id="KW-0249">Electron transport</keyword>
<keyword id="KW-0285">Flavoprotein</keyword>
<keyword id="KW-0288">FMN</keyword>
<keyword id="KW-0349">Heme</keyword>
<keyword id="KW-0408">Iron</keyword>
<keyword id="KW-0472">Membrane</keyword>
<keyword id="KW-0479">Metal-binding</keyword>
<keyword id="KW-1185">Reference proteome</keyword>
<keyword id="KW-0812">Transmembrane</keyword>
<keyword id="KW-1133">Transmembrane helix</keyword>
<keyword id="KW-0813">Transport</keyword>
<evidence type="ECO:0000255" key="1">
    <source>
        <dbReference type="HAMAP-Rule" id="MF_01207"/>
    </source>
</evidence>
<dbReference type="EMBL" id="AE013598">
    <property type="protein sequence ID" value="AAW75644.1"/>
    <property type="molecule type" value="Genomic_DNA"/>
</dbReference>
<dbReference type="SMR" id="Q5H077"/>
<dbReference type="STRING" id="291331.XOO2390"/>
<dbReference type="KEGG" id="xoo:XOO2390"/>
<dbReference type="HOGENOM" id="CLU_080662_0_1_6"/>
<dbReference type="Proteomes" id="UP000006735">
    <property type="component" value="Chromosome"/>
</dbReference>
<dbReference type="GO" id="GO:0005886">
    <property type="term" value="C:plasma membrane"/>
    <property type="evidence" value="ECO:0007669"/>
    <property type="project" value="UniProtKB-SubCell"/>
</dbReference>
<dbReference type="GO" id="GO:0009055">
    <property type="term" value="F:electron transfer activity"/>
    <property type="evidence" value="ECO:0007669"/>
    <property type="project" value="UniProtKB-UniRule"/>
</dbReference>
<dbReference type="GO" id="GO:0010181">
    <property type="term" value="F:FMN binding"/>
    <property type="evidence" value="ECO:0007669"/>
    <property type="project" value="UniProtKB-UniRule"/>
</dbReference>
<dbReference type="GO" id="GO:0020037">
    <property type="term" value="F:heme binding"/>
    <property type="evidence" value="ECO:0007669"/>
    <property type="project" value="UniProtKB-UniRule"/>
</dbReference>
<dbReference type="GO" id="GO:0046872">
    <property type="term" value="F:metal ion binding"/>
    <property type="evidence" value="ECO:0007669"/>
    <property type="project" value="UniProtKB-KW"/>
</dbReference>
<dbReference type="GO" id="GO:0016679">
    <property type="term" value="F:oxidoreductase activity, acting on diphenols and related substances as donors"/>
    <property type="evidence" value="ECO:0007669"/>
    <property type="project" value="TreeGrafter"/>
</dbReference>
<dbReference type="GO" id="GO:0030091">
    <property type="term" value="P:protein repair"/>
    <property type="evidence" value="ECO:0007669"/>
    <property type="project" value="UniProtKB-UniRule"/>
</dbReference>
<dbReference type="HAMAP" id="MF_01207">
    <property type="entry name" value="MsrQ"/>
    <property type="match status" value="1"/>
</dbReference>
<dbReference type="InterPro" id="IPR013130">
    <property type="entry name" value="Fe3_Rdtase_TM_dom"/>
</dbReference>
<dbReference type="InterPro" id="IPR022837">
    <property type="entry name" value="MsrQ-like"/>
</dbReference>
<dbReference type="NCBIfam" id="NF003835">
    <property type="entry name" value="PRK05419.2-2"/>
    <property type="match status" value="1"/>
</dbReference>
<dbReference type="PANTHER" id="PTHR36964">
    <property type="entry name" value="PROTEIN-METHIONINE-SULFOXIDE REDUCTASE HEME-BINDING SUBUNIT MSRQ"/>
    <property type="match status" value="1"/>
</dbReference>
<dbReference type="PANTHER" id="PTHR36964:SF1">
    <property type="entry name" value="PROTEIN-METHIONINE-SULFOXIDE REDUCTASE HEME-BINDING SUBUNIT MSRQ"/>
    <property type="match status" value="1"/>
</dbReference>
<dbReference type="Pfam" id="PF01794">
    <property type="entry name" value="Ferric_reduct"/>
    <property type="match status" value="1"/>
</dbReference>
<protein>
    <recommendedName>
        <fullName evidence="1">Protein-methionine-sulfoxide reductase heme-binding subunit MsrQ</fullName>
    </recommendedName>
    <alternativeName>
        <fullName evidence="1">Flavocytochrome MsrQ</fullName>
    </alternativeName>
</protein>
<reference key="1">
    <citation type="journal article" date="2005" name="Nucleic Acids Res.">
        <title>The genome sequence of Xanthomonas oryzae pathovar oryzae KACC10331, the bacterial blight pathogen of rice.</title>
        <authorList>
            <person name="Lee B.-M."/>
            <person name="Park Y.-J."/>
            <person name="Park D.-S."/>
            <person name="Kang H.-W."/>
            <person name="Kim J.-G."/>
            <person name="Song E.-S."/>
            <person name="Park I.-C."/>
            <person name="Yoon U.-H."/>
            <person name="Hahn J.-H."/>
            <person name="Koo B.-S."/>
            <person name="Lee G.-B."/>
            <person name="Kim H."/>
            <person name="Park H.-S."/>
            <person name="Yoon K.-O."/>
            <person name="Kim J.-H."/>
            <person name="Jung C.-H."/>
            <person name="Koh N.-H."/>
            <person name="Seo J.-S."/>
            <person name="Go S.-J."/>
        </authorList>
    </citation>
    <scope>NUCLEOTIDE SEQUENCE [LARGE SCALE GENOMIC DNA]</scope>
    <source>
        <strain>KACC10331 / KXO85</strain>
    </source>
</reference>